<feature type="chain" id="PRO_0000234588" description="Zinc finger protein 555">
    <location>
        <begin position="1"/>
        <end position="628"/>
    </location>
</feature>
<feature type="domain" description="KRAB" evidence="2">
    <location>
        <begin position="4"/>
        <end position="77"/>
    </location>
</feature>
<feature type="zinc finger region" description="C2H2-type 1; degenerate" evidence="1">
    <location>
        <begin position="172"/>
        <end position="194"/>
    </location>
</feature>
<feature type="zinc finger region" description="C2H2-type 2" evidence="1">
    <location>
        <begin position="200"/>
        <end position="222"/>
    </location>
</feature>
<feature type="zinc finger region" description="C2H2-type 3" evidence="1">
    <location>
        <begin position="228"/>
        <end position="250"/>
    </location>
</feature>
<feature type="zinc finger region" description="C2H2-type 4" evidence="1">
    <location>
        <begin position="256"/>
        <end position="278"/>
    </location>
</feature>
<feature type="zinc finger region" description="C2H2-type 5" evidence="1">
    <location>
        <begin position="284"/>
        <end position="306"/>
    </location>
</feature>
<feature type="zinc finger region" description="C2H2-type 6" evidence="1">
    <location>
        <begin position="312"/>
        <end position="334"/>
    </location>
</feature>
<feature type="zinc finger region" description="C2H2-type 7" evidence="1">
    <location>
        <begin position="340"/>
        <end position="362"/>
    </location>
</feature>
<feature type="zinc finger region" description="C2H2-type 8" evidence="1">
    <location>
        <begin position="368"/>
        <end position="390"/>
    </location>
</feature>
<feature type="zinc finger region" description="C2H2-type 9" evidence="1">
    <location>
        <begin position="396"/>
        <end position="418"/>
    </location>
</feature>
<feature type="zinc finger region" description="C2H2-type 10" evidence="1">
    <location>
        <begin position="424"/>
        <end position="446"/>
    </location>
</feature>
<feature type="zinc finger region" description="C2H2-type 11" evidence="1">
    <location>
        <begin position="452"/>
        <end position="474"/>
    </location>
</feature>
<feature type="zinc finger region" description="C2H2-type 12" evidence="1">
    <location>
        <begin position="480"/>
        <end position="502"/>
    </location>
</feature>
<feature type="zinc finger region" description="C2H2-type 13" evidence="1">
    <location>
        <begin position="508"/>
        <end position="530"/>
    </location>
</feature>
<feature type="zinc finger region" description="C2H2-type 14" evidence="1">
    <location>
        <begin position="536"/>
        <end position="558"/>
    </location>
</feature>
<feature type="zinc finger region" description="C2H2-type 15" evidence="1">
    <location>
        <begin position="564"/>
        <end position="586"/>
    </location>
</feature>
<feature type="splice variant" id="VSP_018382" description="In isoform 2 and isoform 3." evidence="4">
    <location>
        <position position="105"/>
    </location>
</feature>
<feature type="splice variant" id="VSP_018383" description="In isoform 2." evidence="4">
    <original>PYE</original>
    <variation>LYK</variation>
    <location>
        <begin position="451"/>
        <end position="453"/>
    </location>
</feature>
<feature type="splice variant" id="VSP_018384" description="In isoform 2." evidence="4">
    <location>
        <begin position="460"/>
        <end position="543"/>
    </location>
</feature>
<feature type="sequence variant" id="VAR_054223" description="In dbSNP:rs17856649." evidence="3">
    <original>N</original>
    <variation>D</variation>
    <location>
        <position position="107"/>
    </location>
</feature>
<feature type="sequence variant" id="VAR_054224" description="In dbSNP:rs36012545.">
    <original>P</original>
    <variation>L</variation>
    <location>
        <position position="137"/>
    </location>
</feature>
<feature type="sequence variant" id="VAR_054225" description="In dbSNP:rs17851955." evidence="3">
    <original>H</original>
    <variation>N</variation>
    <location>
        <position position="194"/>
    </location>
</feature>
<feature type="sequence variant" id="VAR_026295" description="In dbSNP:rs17856648." evidence="3">
    <original>K</original>
    <variation>T</variation>
    <location>
        <position position="515"/>
    </location>
</feature>
<feature type="sequence conflict" description="In Ref. 1; BAF85643." evidence="5" ref="1">
    <original>I</original>
    <variation>T</variation>
    <location>
        <position position="304"/>
    </location>
</feature>
<name>ZN555_HUMAN</name>
<keyword id="KW-0025">Alternative splicing</keyword>
<keyword id="KW-0238">DNA-binding</keyword>
<keyword id="KW-0479">Metal-binding</keyword>
<keyword id="KW-0539">Nucleus</keyword>
<keyword id="KW-1267">Proteomics identification</keyword>
<keyword id="KW-1185">Reference proteome</keyword>
<keyword id="KW-0677">Repeat</keyword>
<keyword id="KW-0804">Transcription</keyword>
<keyword id="KW-0805">Transcription regulation</keyword>
<keyword id="KW-0862">Zinc</keyword>
<keyword id="KW-0863">Zinc-finger</keyword>
<sequence length="628" mass="73084">MDSVVFEDVAVDFTLEEWALLDSAQRDLYRDVMLETFQNLASVDDETQFKASGSVSQQDIYGEKIPKESKIATFTRNVSWASVLGKIWDSLSIEDQTTNQGRNLSRNHGLERLCESNDQCGEALSQIPHLNLYKKIPPGVKQYEYNTYGKVFMHRRTSLKSPITVHTGHKPYQCQECGQAYSCRSHLRMHVRTHNGERPYVCKLCGKTFPRTSSLNRHVRIHTAEKTYECKQCGKAFIDFSSLTSHLRSHTGEKPYKCKECGKAFSYSSTFRRHTITHTGEKPYKCKECAEAFSYSSTFRRHMISHTGEKPHKCKECGEAFSYSSAFRRHMITHTGEKPYECKQCGKTFIYLQSFRRHERIHTGEKPYECKQCGKTFIYPQSFRRHERTHGGEKPYECNQCGKAFSHPSSFRGHMRVHTGEKPYECKQCGKTFNWPISLRKHMRTHTREKPYECKQCGKAFSLSACFREHVRMHPEDKSYECKLCGKAFYCHISLQKHMRRHTAEKLYKCKQCGKAFSWPELLQQHVRTHTVEKPYECKECGKVFKWPSSLPIHMRLHTGEKPYQCKHCGKAFNCSSSLRRHVRIHTTEKQYKCNVGHPPANEFMCSASEKSHQERDLIKVVNMVLPL</sequence>
<evidence type="ECO:0000255" key="1">
    <source>
        <dbReference type="PROSITE-ProRule" id="PRU00042"/>
    </source>
</evidence>
<evidence type="ECO:0000255" key="2">
    <source>
        <dbReference type="PROSITE-ProRule" id="PRU00119"/>
    </source>
</evidence>
<evidence type="ECO:0000269" key="3">
    <source>
    </source>
</evidence>
<evidence type="ECO:0000303" key="4">
    <source>
    </source>
</evidence>
<evidence type="ECO:0000305" key="5"/>
<organism>
    <name type="scientific">Homo sapiens</name>
    <name type="common">Human</name>
    <dbReference type="NCBI Taxonomy" id="9606"/>
    <lineage>
        <taxon>Eukaryota</taxon>
        <taxon>Metazoa</taxon>
        <taxon>Chordata</taxon>
        <taxon>Craniata</taxon>
        <taxon>Vertebrata</taxon>
        <taxon>Euteleostomi</taxon>
        <taxon>Mammalia</taxon>
        <taxon>Eutheria</taxon>
        <taxon>Euarchontoglires</taxon>
        <taxon>Primates</taxon>
        <taxon>Haplorrhini</taxon>
        <taxon>Catarrhini</taxon>
        <taxon>Hominidae</taxon>
        <taxon>Homo</taxon>
    </lineage>
</organism>
<dbReference type="EMBL" id="AK093163">
    <property type="protein sequence ID" value="BAC04082.1"/>
    <property type="molecule type" value="mRNA"/>
</dbReference>
<dbReference type="EMBL" id="AK292954">
    <property type="protein sequence ID" value="BAF85643.1"/>
    <property type="molecule type" value="mRNA"/>
</dbReference>
<dbReference type="EMBL" id="BX647423">
    <property type="status" value="NOT_ANNOTATED_CDS"/>
    <property type="molecule type" value="mRNA"/>
</dbReference>
<dbReference type="EMBL" id="AC006130">
    <property type="status" value="NOT_ANNOTATED_CDS"/>
    <property type="molecule type" value="Genomic_DNA"/>
</dbReference>
<dbReference type="EMBL" id="BC022022">
    <property type="protein sequence ID" value="AAH22022.2"/>
    <property type="molecule type" value="mRNA"/>
</dbReference>
<dbReference type="CCDS" id="CCDS12096.1">
    <molecule id="Q8NEP9-1"/>
</dbReference>
<dbReference type="CCDS" id="CCDS59329.1">
    <molecule id="Q8NEP9-4"/>
</dbReference>
<dbReference type="RefSeq" id="NP_001166246.1">
    <molecule id="Q8NEP9-4"/>
    <property type="nucleotide sequence ID" value="NM_001172775.2"/>
</dbReference>
<dbReference type="RefSeq" id="NP_690004.4">
    <molecule id="Q8NEP9-1"/>
    <property type="nucleotide sequence ID" value="NM_152791.4"/>
</dbReference>
<dbReference type="SMR" id="Q8NEP9"/>
<dbReference type="BioGRID" id="127136">
    <property type="interactions" value="13"/>
</dbReference>
<dbReference type="FunCoup" id="Q8NEP9">
    <property type="interactions" value="8"/>
</dbReference>
<dbReference type="IntAct" id="Q8NEP9">
    <property type="interactions" value="9"/>
</dbReference>
<dbReference type="STRING" id="9606.ENSP00000334853"/>
<dbReference type="GlyGen" id="Q8NEP9">
    <property type="glycosylation" value="1 site, 1 O-linked glycan (1 site)"/>
</dbReference>
<dbReference type="iPTMnet" id="Q8NEP9"/>
<dbReference type="PhosphoSitePlus" id="Q8NEP9"/>
<dbReference type="BioMuta" id="ZNF555"/>
<dbReference type="DMDM" id="221222537"/>
<dbReference type="jPOST" id="Q8NEP9"/>
<dbReference type="MassIVE" id="Q8NEP9"/>
<dbReference type="PaxDb" id="9606-ENSP00000334853"/>
<dbReference type="PeptideAtlas" id="Q8NEP9"/>
<dbReference type="ProteomicsDB" id="73197">
    <molecule id="Q8NEP9-1"/>
</dbReference>
<dbReference type="ProteomicsDB" id="73198">
    <molecule id="Q8NEP9-2"/>
</dbReference>
<dbReference type="Pumba" id="Q8NEP9"/>
<dbReference type="Antibodypedia" id="10850">
    <property type="antibodies" value="158 antibodies from 18 providers"/>
</dbReference>
<dbReference type="DNASU" id="148254"/>
<dbReference type="Ensembl" id="ENST00000334241.9">
    <molecule id="Q8NEP9-1"/>
    <property type="protein sequence ID" value="ENSP00000334853.3"/>
    <property type="gene ID" value="ENSG00000186300.12"/>
</dbReference>
<dbReference type="Ensembl" id="ENST00000591539.1">
    <molecule id="Q8NEP9-4"/>
    <property type="protein sequence ID" value="ENSP00000467893.1"/>
    <property type="gene ID" value="ENSG00000186300.12"/>
</dbReference>
<dbReference type="GeneID" id="148254"/>
<dbReference type="KEGG" id="hsa:148254"/>
<dbReference type="MANE-Select" id="ENST00000334241.9">
    <property type="protein sequence ID" value="ENSP00000334853.3"/>
    <property type="RefSeq nucleotide sequence ID" value="NM_152791.5"/>
    <property type="RefSeq protein sequence ID" value="NP_690004.4"/>
</dbReference>
<dbReference type="UCSC" id="uc002lwn.5">
    <molecule id="Q8NEP9-1"/>
    <property type="organism name" value="human"/>
</dbReference>
<dbReference type="AGR" id="HGNC:28382"/>
<dbReference type="CTD" id="148254"/>
<dbReference type="DisGeNET" id="148254"/>
<dbReference type="GeneCards" id="ZNF555"/>
<dbReference type="HGNC" id="HGNC:28382">
    <property type="gene designation" value="ZNF555"/>
</dbReference>
<dbReference type="HPA" id="ENSG00000186300">
    <property type="expression patterns" value="Low tissue specificity"/>
</dbReference>
<dbReference type="neXtProt" id="NX_Q8NEP9"/>
<dbReference type="OpenTargets" id="ENSG00000186300"/>
<dbReference type="PharmGKB" id="PA134956715"/>
<dbReference type="VEuPathDB" id="HostDB:ENSG00000186300"/>
<dbReference type="eggNOG" id="KOG1721">
    <property type="taxonomic scope" value="Eukaryota"/>
</dbReference>
<dbReference type="GeneTree" id="ENSGT00940000163425"/>
<dbReference type="HOGENOM" id="CLU_002678_44_5_1"/>
<dbReference type="InParanoid" id="Q8NEP9"/>
<dbReference type="OMA" id="CGRAYSC"/>
<dbReference type="OrthoDB" id="427030at2759"/>
<dbReference type="PAN-GO" id="Q8NEP9">
    <property type="GO annotations" value="3 GO annotations based on evolutionary models"/>
</dbReference>
<dbReference type="PhylomeDB" id="Q8NEP9"/>
<dbReference type="TreeFam" id="TF338854"/>
<dbReference type="PathwayCommons" id="Q8NEP9"/>
<dbReference type="Reactome" id="R-HSA-212436">
    <property type="pathway name" value="Generic Transcription Pathway"/>
</dbReference>
<dbReference type="SignaLink" id="Q8NEP9"/>
<dbReference type="BioGRID-ORCS" id="148254">
    <property type="hits" value="10 hits in 1172 CRISPR screens"/>
</dbReference>
<dbReference type="GenomeRNAi" id="148254"/>
<dbReference type="Pharos" id="Q8NEP9">
    <property type="development level" value="Tdark"/>
</dbReference>
<dbReference type="PRO" id="PR:Q8NEP9"/>
<dbReference type="Proteomes" id="UP000005640">
    <property type="component" value="Chromosome 19"/>
</dbReference>
<dbReference type="RNAct" id="Q8NEP9">
    <property type="molecule type" value="protein"/>
</dbReference>
<dbReference type="Bgee" id="ENSG00000186300">
    <property type="expression patterns" value="Expressed in amniotic fluid and 175 other cell types or tissues"/>
</dbReference>
<dbReference type="ExpressionAtlas" id="Q8NEP9">
    <property type="expression patterns" value="baseline and differential"/>
</dbReference>
<dbReference type="GO" id="GO:0005634">
    <property type="term" value="C:nucleus"/>
    <property type="evidence" value="ECO:0000318"/>
    <property type="project" value="GO_Central"/>
</dbReference>
<dbReference type="GO" id="GO:0000981">
    <property type="term" value="F:DNA-binding transcription factor activity, RNA polymerase II-specific"/>
    <property type="evidence" value="ECO:0000318"/>
    <property type="project" value="GO_Central"/>
</dbReference>
<dbReference type="GO" id="GO:0000977">
    <property type="term" value="F:RNA polymerase II transcription regulatory region sequence-specific DNA binding"/>
    <property type="evidence" value="ECO:0000318"/>
    <property type="project" value="GO_Central"/>
</dbReference>
<dbReference type="GO" id="GO:0008270">
    <property type="term" value="F:zinc ion binding"/>
    <property type="evidence" value="ECO:0007669"/>
    <property type="project" value="UniProtKB-KW"/>
</dbReference>
<dbReference type="GO" id="GO:0006357">
    <property type="term" value="P:regulation of transcription by RNA polymerase II"/>
    <property type="evidence" value="ECO:0000318"/>
    <property type="project" value="GO_Central"/>
</dbReference>
<dbReference type="CDD" id="cd07765">
    <property type="entry name" value="KRAB_A-box"/>
    <property type="match status" value="1"/>
</dbReference>
<dbReference type="FunFam" id="3.30.160.60:FF:003187">
    <property type="match status" value="1"/>
</dbReference>
<dbReference type="FunFam" id="3.30.160.60:FF:000957">
    <property type="entry name" value="Zinc finger protein 12"/>
    <property type="match status" value="1"/>
</dbReference>
<dbReference type="FunFam" id="3.30.160.60:FF:001903">
    <property type="entry name" value="Zinc finger protein 16"/>
    <property type="match status" value="1"/>
</dbReference>
<dbReference type="FunFam" id="3.30.160.60:FF:000044">
    <property type="entry name" value="zinc finger protein 37 homolog"/>
    <property type="match status" value="2"/>
</dbReference>
<dbReference type="FunFam" id="3.30.160.60:FF:000801">
    <property type="entry name" value="zinc finger protein 461 isoform X2"/>
    <property type="match status" value="1"/>
</dbReference>
<dbReference type="FunFam" id="3.30.160.60:FF:002254">
    <property type="entry name" value="Zinc finger protein 540"/>
    <property type="match status" value="1"/>
</dbReference>
<dbReference type="FunFam" id="3.30.160.60:FF:000371">
    <property type="entry name" value="Zinc finger protein 555"/>
    <property type="match status" value="1"/>
</dbReference>
<dbReference type="FunFam" id="3.30.160.60:FF:001146">
    <property type="entry name" value="Zinc finger protein 555"/>
    <property type="match status" value="1"/>
</dbReference>
<dbReference type="FunFam" id="3.30.160.60:FF:002686">
    <property type="entry name" value="Zinc finger protein 555"/>
    <property type="match status" value="1"/>
</dbReference>
<dbReference type="FunFam" id="3.30.160.60:FF:000156">
    <property type="entry name" value="Zinc finger protein 568"/>
    <property type="match status" value="3"/>
</dbReference>
<dbReference type="FunFam" id="3.30.160.60:FF:000564">
    <property type="entry name" value="zinc finger protein 699"/>
    <property type="match status" value="1"/>
</dbReference>
<dbReference type="FunFam" id="3.30.160.60:FF:000113">
    <property type="entry name" value="zinc finger protein 699 isoform X1"/>
    <property type="match status" value="1"/>
</dbReference>
<dbReference type="Gene3D" id="6.10.140.140">
    <property type="match status" value="1"/>
</dbReference>
<dbReference type="Gene3D" id="3.30.160.60">
    <property type="entry name" value="Classic Zinc Finger"/>
    <property type="match status" value="15"/>
</dbReference>
<dbReference type="InterPro" id="IPR050752">
    <property type="entry name" value="C2H2-ZF_domain"/>
</dbReference>
<dbReference type="InterPro" id="IPR001909">
    <property type="entry name" value="KRAB"/>
</dbReference>
<dbReference type="InterPro" id="IPR036051">
    <property type="entry name" value="KRAB_dom_sf"/>
</dbReference>
<dbReference type="InterPro" id="IPR036236">
    <property type="entry name" value="Znf_C2H2_sf"/>
</dbReference>
<dbReference type="InterPro" id="IPR013087">
    <property type="entry name" value="Znf_C2H2_type"/>
</dbReference>
<dbReference type="PANTHER" id="PTHR24384">
    <property type="entry name" value="FINGER PUTATIVE TRANSCRIPTION FACTOR FAMILY-RELATED"/>
    <property type="match status" value="1"/>
</dbReference>
<dbReference type="PANTHER" id="PTHR24384:SF247">
    <property type="entry name" value="ZINC FINGER PROTEIN 977"/>
    <property type="match status" value="1"/>
</dbReference>
<dbReference type="Pfam" id="PF01352">
    <property type="entry name" value="KRAB"/>
    <property type="match status" value="1"/>
</dbReference>
<dbReference type="Pfam" id="PF00096">
    <property type="entry name" value="zf-C2H2"/>
    <property type="match status" value="13"/>
</dbReference>
<dbReference type="Pfam" id="PF13894">
    <property type="entry name" value="zf-C2H2_4"/>
    <property type="match status" value="1"/>
</dbReference>
<dbReference type="SMART" id="SM00349">
    <property type="entry name" value="KRAB"/>
    <property type="match status" value="1"/>
</dbReference>
<dbReference type="SMART" id="SM00355">
    <property type="entry name" value="ZnF_C2H2"/>
    <property type="match status" value="15"/>
</dbReference>
<dbReference type="SUPFAM" id="SSF57667">
    <property type="entry name" value="beta-beta-alpha zinc fingers"/>
    <property type="match status" value="8"/>
</dbReference>
<dbReference type="SUPFAM" id="SSF109640">
    <property type="entry name" value="KRAB domain (Kruppel-associated box)"/>
    <property type="match status" value="1"/>
</dbReference>
<dbReference type="PROSITE" id="PS50805">
    <property type="entry name" value="KRAB"/>
    <property type="match status" value="1"/>
</dbReference>
<dbReference type="PROSITE" id="PS00028">
    <property type="entry name" value="ZINC_FINGER_C2H2_1"/>
    <property type="match status" value="15"/>
</dbReference>
<dbReference type="PROSITE" id="PS50157">
    <property type="entry name" value="ZINC_FINGER_C2H2_2"/>
    <property type="match status" value="15"/>
</dbReference>
<accession>Q8NEP9</accession>
<accession>A8KA89</accession>
<accession>K7EQM2</accession>
<accession>Q8NA46</accession>
<accession>Q96MP1</accession>
<gene>
    <name type="primary">ZNF555</name>
</gene>
<protein>
    <recommendedName>
        <fullName>Zinc finger protein 555</fullName>
    </recommendedName>
</protein>
<comment type="function">
    <text>May be involved in transcriptional regulation.</text>
</comment>
<comment type="interaction">
    <interactant intactId="EBI-10270752">
        <id>Q8NEP9</id>
    </interactant>
    <interactant intactId="EBI-748961">
        <id>O95273</id>
        <label>CCNDBP1</label>
    </interactant>
    <organismsDiffer>false</organismsDiffer>
    <experiments>4</experiments>
</comment>
<comment type="interaction">
    <interactant intactId="EBI-10270752">
        <id>Q8NEP9</id>
    </interactant>
    <interactant intactId="EBI-739624">
        <id>Q8NHQ1</id>
        <label>CEP70</label>
    </interactant>
    <organismsDiffer>false</organismsDiffer>
    <experiments>3</experiments>
</comment>
<comment type="interaction">
    <interactant intactId="EBI-10270752">
        <id>Q8NEP9</id>
    </interactant>
    <interactant intactId="EBI-10172290">
        <id>P60409</id>
        <label>KRTAP10-7</label>
    </interactant>
    <organismsDiffer>false</organismsDiffer>
    <experiments>3</experiments>
</comment>
<comment type="subcellular location">
    <subcellularLocation>
        <location evidence="5">Nucleus</location>
    </subcellularLocation>
</comment>
<comment type="alternative products">
    <event type="alternative splicing"/>
    <isoform>
        <id>Q8NEP9-1</id>
        <name>1</name>
        <sequence type="displayed"/>
    </isoform>
    <isoform>
        <id>Q8NEP9-2</id>
        <name>2</name>
        <sequence type="described" ref="VSP_018382 VSP_018383 VSP_018384"/>
    </isoform>
    <isoform>
        <id>Q8NEP9-4</id>
        <name>3</name>
        <sequence type="described" ref="VSP_018382"/>
    </isoform>
</comment>
<comment type="similarity">
    <text evidence="5">Belongs to the krueppel C2H2-type zinc-finger protein family.</text>
</comment>
<reference key="1">
    <citation type="journal article" date="2004" name="Nat. Genet.">
        <title>Complete sequencing and characterization of 21,243 full-length human cDNAs.</title>
        <authorList>
            <person name="Ota T."/>
            <person name="Suzuki Y."/>
            <person name="Nishikawa T."/>
            <person name="Otsuki T."/>
            <person name="Sugiyama T."/>
            <person name="Irie R."/>
            <person name="Wakamatsu A."/>
            <person name="Hayashi K."/>
            <person name="Sato H."/>
            <person name="Nagai K."/>
            <person name="Kimura K."/>
            <person name="Makita H."/>
            <person name="Sekine M."/>
            <person name="Obayashi M."/>
            <person name="Nishi T."/>
            <person name="Shibahara T."/>
            <person name="Tanaka T."/>
            <person name="Ishii S."/>
            <person name="Yamamoto J."/>
            <person name="Saito K."/>
            <person name="Kawai Y."/>
            <person name="Isono Y."/>
            <person name="Nakamura Y."/>
            <person name="Nagahari K."/>
            <person name="Murakami K."/>
            <person name="Yasuda T."/>
            <person name="Iwayanagi T."/>
            <person name="Wagatsuma M."/>
            <person name="Shiratori A."/>
            <person name="Sudo H."/>
            <person name="Hosoiri T."/>
            <person name="Kaku Y."/>
            <person name="Kodaira H."/>
            <person name="Kondo H."/>
            <person name="Sugawara M."/>
            <person name="Takahashi M."/>
            <person name="Kanda K."/>
            <person name="Yokoi T."/>
            <person name="Furuya T."/>
            <person name="Kikkawa E."/>
            <person name="Omura Y."/>
            <person name="Abe K."/>
            <person name="Kamihara K."/>
            <person name="Katsuta N."/>
            <person name="Sato K."/>
            <person name="Tanikawa M."/>
            <person name="Yamazaki M."/>
            <person name="Ninomiya K."/>
            <person name="Ishibashi T."/>
            <person name="Yamashita H."/>
            <person name="Murakawa K."/>
            <person name="Fujimori K."/>
            <person name="Tanai H."/>
            <person name="Kimata M."/>
            <person name="Watanabe M."/>
            <person name="Hiraoka S."/>
            <person name="Chiba Y."/>
            <person name="Ishida S."/>
            <person name="Ono Y."/>
            <person name="Takiguchi S."/>
            <person name="Watanabe S."/>
            <person name="Yosida M."/>
            <person name="Hotuta T."/>
            <person name="Kusano J."/>
            <person name="Kanehori K."/>
            <person name="Takahashi-Fujii A."/>
            <person name="Hara H."/>
            <person name="Tanase T.-O."/>
            <person name="Nomura Y."/>
            <person name="Togiya S."/>
            <person name="Komai F."/>
            <person name="Hara R."/>
            <person name="Takeuchi K."/>
            <person name="Arita M."/>
            <person name="Imose N."/>
            <person name="Musashino K."/>
            <person name="Yuuki H."/>
            <person name="Oshima A."/>
            <person name="Sasaki N."/>
            <person name="Aotsuka S."/>
            <person name="Yoshikawa Y."/>
            <person name="Matsunawa H."/>
            <person name="Ichihara T."/>
            <person name="Shiohata N."/>
            <person name="Sano S."/>
            <person name="Moriya S."/>
            <person name="Momiyama H."/>
            <person name="Satoh N."/>
            <person name="Takami S."/>
            <person name="Terashima Y."/>
            <person name="Suzuki O."/>
            <person name="Nakagawa S."/>
            <person name="Senoh A."/>
            <person name="Mizoguchi H."/>
            <person name="Goto Y."/>
            <person name="Shimizu F."/>
            <person name="Wakebe H."/>
            <person name="Hishigaki H."/>
            <person name="Watanabe T."/>
            <person name="Sugiyama A."/>
            <person name="Takemoto M."/>
            <person name="Kawakami B."/>
            <person name="Yamazaki M."/>
            <person name="Watanabe K."/>
            <person name="Kumagai A."/>
            <person name="Itakura S."/>
            <person name="Fukuzumi Y."/>
            <person name="Fujimori Y."/>
            <person name="Komiyama M."/>
            <person name="Tashiro H."/>
            <person name="Tanigami A."/>
            <person name="Fujiwara T."/>
            <person name="Ono T."/>
            <person name="Yamada K."/>
            <person name="Fujii Y."/>
            <person name="Ozaki K."/>
            <person name="Hirao M."/>
            <person name="Ohmori Y."/>
            <person name="Kawabata A."/>
            <person name="Hikiji T."/>
            <person name="Kobatake N."/>
            <person name="Inagaki H."/>
            <person name="Ikema Y."/>
            <person name="Okamoto S."/>
            <person name="Okitani R."/>
            <person name="Kawakami T."/>
            <person name="Noguchi S."/>
            <person name="Itoh T."/>
            <person name="Shigeta K."/>
            <person name="Senba T."/>
            <person name="Matsumura K."/>
            <person name="Nakajima Y."/>
            <person name="Mizuno T."/>
            <person name="Morinaga M."/>
            <person name="Sasaki M."/>
            <person name="Togashi T."/>
            <person name="Oyama M."/>
            <person name="Hata H."/>
            <person name="Watanabe M."/>
            <person name="Komatsu T."/>
            <person name="Mizushima-Sugano J."/>
            <person name="Satoh T."/>
            <person name="Shirai Y."/>
            <person name="Takahashi Y."/>
            <person name="Nakagawa K."/>
            <person name="Okumura K."/>
            <person name="Nagase T."/>
            <person name="Nomura N."/>
            <person name="Kikuchi H."/>
            <person name="Masuho Y."/>
            <person name="Yamashita R."/>
            <person name="Nakai K."/>
            <person name="Yada T."/>
            <person name="Nakamura Y."/>
            <person name="Ohara O."/>
            <person name="Isogai T."/>
            <person name="Sugano S."/>
        </authorList>
    </citation>
    <scope>NUCLEOTIDE SEQUENCE [LARGE SCALE MRNA] (ISOFORMS 2 AND 3)</scope>
    <source>
        <tissue>Testis</tissue>
        <tissue>Trachea</tissue>
    </source>
</reference>
<reference key="2">
    <citation type="journal article" date="2007" name="BMC Genomics">
        <title>The full-ORF clone resource of the German cDNA consortium.</title>
        <authorList>
            <person name="Bechtel S."/>
            <person name="Rosenfelder H."/>
            <person name="Duda A."/>
            <person name="Schmidt C.P."/>
            <person name="Ernst U."/>
            <person name="Wellenreuther R."/>
            <person name="Mehrle A."/>
            <person name="Schuster C."/>
            <person name="Bahr A."/>
            <person name="Bloecker H."/>
            <person name="Heubner D."/>
            <person name="Hoerlein A."/>
            <person name="Michel G."/>
            <person name="Wedler H."/>
            <person name="Koehrer K."/>
            <person name="Ottenwaelder B."/>
            <person name="Poustka A."/>
            <person name="Wiemann S."/>
            <person name="Schupp I."/>
        </authorList>
    </citation>
    <scope>NUCLEOTIDE SEQUENCE [LARGE SCALE MRNA] (ISOFORM 1)</scope>
    <source>
        <tissue>Colon endothelium</tissue>
    </source>
</reference>
<reference key="3">
    <citation type="journal article" date="2004" name="Nature">
        <title>The DNA sequence and biology of human chromosome 19.</title>
        <authorList>
            <person name="Grimwood J."/>
            <person name="Gordon L.A."/>
            <person name="Olsen A.S."/>
            <person name="Terry A."/>
            <person name="Schmutz J."/>
            <person name="Lamerdin J.E."/>
            <person name="Hellsten U."/>
            <person name="Goodstein D."/>
            <person name="Couronne O."/>
            <person name="Tran-Gyamfi M."/>
            <person name="Aerts A."/>
            <person name="Altherr M."/>
            <person name="Ashworth L."/>
            <person name="Bajorek E."/>
            <person name="Black S."/>
            <person name="Branscomb E."/>
            <person name="Caenepeel S."/>
            <person name="Carrano A.V."/>
            <person name="Caoile C."/>
            <person name="Chan Y.M."/>
            <person name="Christensen M."/>
            <person name="Cleland C.A."/>
            <person name="Copeland A."/>
            <person name="Dalin E."/>
            <person name="Dehal P."/>
            <person name="Denys M."/>
            <person name="Detter J.C."/>
            <person name="Escobar J."/>
            <person name="Flowers D."/>
            <person name="Fotopulos D."/>
            <person name="Garcia C."/>
            <person name="Georgescu A.M."/>
            <person name="Glavina T."/>
            <person name="Gomez M."/>
            <person name="Gonzales E."/>
            <person name="Groza M."/>
            <person name="Hammon N."/>
            <person name="Hawkins T."/>
            <person name="Haydu L."/>
            <person name="Ho I."/>
            <person name="Huang W."/>
            <person name="Israni S."/>
            <person name="Jett J."/>
            <person name="Kadner K."/>
            <person name="Kimball H."/>
            <person name="Kobayashi A."/>
            <person name="Larionov V."/>
            <person name="Leem S.-H."/>
            <person name="Lopez F."/>
            <person name="Lou Y."/>
            <person name="Lowry S."/>
            <person name="Malfatti S."/>
            <person name="Martinez D."/>
            <person name="McCready P.M."/>
            <person name="Medina C."/>
            <person name="Morgan J."/>
            <person name="Nelson K."/>
            <person name="Nolan M."/>
            <person name="Ovcharenko I."/>
            <person name="Pitluck S."/>
            <person name="Pollard M."/>
            <person name="Popkie A.P."/>
            <person name="Predki P."/>
            <person name="Quan G."/>
            <person name="Ramirez L."/>
            <person name="Rash S."/>
            <person name="Retterer J."/>
            <person name="Rodriguez A."/>
            <person name="Rogers S."/>
            <person name="Salamov A."/>
            <person name="Salazar A."/>
            <person name="She X."/>
            <person name="Smith D."/>
            <person name="Slezak T."/>
            <person name="Solovyev V."/>
            <person name="Thayer N."/>
            <person name="Tice H."/>
            <person name="Tsai M."/>
            <person name="Ustaszewska A."/>
            <person name="Vo N."/>
            <person name="Wagner M."/>
            <person name="Wheeler J."/>
            <person name="Wu K."/>
            <person name="Xie G."/>
            <person name="Yang J."/>
            <person name="Dubchak I."/>
            <person name="Furey T.S."/>
            <person name="DeJong P."/>
            <person name="Dickson M."/>
            <person name="Gordon D."/>
            <person name="Eichler E.E."/>
            <person name="Pennacchio L.A."/>
            <person name="Richardson P."/>
            <person name="Stubbs L."/>
            <person name="Rokhsar D.S."/>
            <person name="Myers R.M."/>
            <person name="Rubin E.M."/>
            <person name="Lucas S.M."/>
        </authorList>
    </citation>
    <scope>NUCLEOTIDE SEQUENCE [LARGE SCALE GENOMIC DNA]</scope>
</reference>
<reference key="4">
    <citation type="journal article" date="2004" name="Genome Res.">
        <title>The status, quality, and expansion of the NIH full-length cDNA project: the Mammalian Gene Collection (MGC).</title>
        <authorList>
            <consortium name="The MGC Project Team"/>
        </authorList>
    </citation>
    <scope>NUCLEOTIDE SEQUENCE [LARGE SCALE MRNA] (ISOFORM 1)</scope>
    <scope>VARIANTS ASP-107; ASN-194 AND THR-515</scope>
    <source>
        <tissue>Testis</tissue>
    </source>
</reference>
<proteinExistence type="evidence at protein level"/>